<accession>Q5FWE3</accession>
<accession>Q49AD0</accession>
<accession>Q6UXY6</accession>
<accession>Q8NBC9</accession>
<gene>
    <name type="primary">PRRT3</name>
    <name type="ORF">UNQ5823/PRO19642</name>
</gene>
<reference key="1">
    <citation type="journal article" date="2003" name="Genome Res.">
        <title>The secreted protein discovery initiative (SPDI), a large-scale effort to identify novel human secreted and transmembrane proteins: a bioinformatics assessment.</title>
        <authorList>
            <person name="Clark H.F."/>
            <person name="Gurney A.L."/>
            <person name="Abaya E."/>
            <person name="Baker K."/>
            <person name="Baldwin D.T."/>
            <person name="Brush J."/>
            <person name="Chen J."/>
            <person name="Chow B."/>
            <person name="Chui C."/>
            <person name="Crowley C."/>
            <person name="Currell B."/>
            <person name="Deuel B."/>
            <person name="Dowd P."/>
            <person name="Eaton D."/>
            <person name="Foster J.S."/>
            <person name="Grimaldi C."/>
            <person name="Gu Q."/>
            <person name="Hass P.E."/>
            <person name="Heldens S."/>
            <person name="Huang A."/>
            <person name="Kim H.S."/>
            <person name="Klimowski L."/>
            <person name="Jin Y."/>
            <person name="Johnson S."/>
            <person name="Lee J."/>
            <person name="Lewis L."/>
            <person name="Liao D."/>
            <person name="Mark M.R."/>
            <person name="Robbie E."/>
            <person name="Sanchez C."/>
            <person name="Schoenfeld J."/>
            <person name="Seshagiri S."/>
            <person name="Simmons L."/>
            <person name="Singh J."/>
            <person name="Smith V."/>
            <person name="Stinson J."/>
            <person name="Vagts A."/>
            <person name="Vandlen R.L."/>
            <person name="Watanabe C."/>
            <person name="Wieand D."/>
            <person name="Woods K."/>
            <person name="Xie M.-H."/>
            <person name="Yansura D.G."/>
            <person name="Yi S."/>
            <person name="Yu G."/>
            <person name="Yuan J."/>
            <person name="Zhang M."/>
            <person name="Zhang Z."/>
            <person name="Goddard A.D."/>
            <person name="Wood W.I."/>
            <person name="Godowski P.J."/>
            <person name="Gray A.M."/>
        </authorList>
    </citation>
    <scope>NUCLEOTIDE SEQUENCE [LARGE SCALE MRNA] (ISOFORM 3)</scope>
</reference>
<reference key="2">
    <citation type="journal article" date="2004" name="Genome Res.">
        <title>The status, quality, and expansion of the NIH full-length cDNA project: the Mammalian Gene Collection (MGC).</title>
        <authorList>
            <consortium name="The MGC Project Team"/>
        </authorList>
    </citation>
    <scope>NUCLEOTIDE SEQUENCE [LARGE SCALE MRNA] (ISOFORMS 1; 2 AND 3)</scope>
    <source>
        <tissue>Brain</tissue>
        <tissue>Chondrosarcoma</tissue>
    </source>
</reference>
<reference key="3">
    <citation type="journal article" date="2004" name="Nat. Genet.">
        <title>Complete sequencing and characterization of 21,243 full-length human cDNAs.</title>
        <authorList>
            <person name="Ota T."/>
            <person name="Suzuki Y."/>
            <person name="Nishikawa T."/>
            <person name="Otsuki T."/>
            <person name="Sugiyama T."/>
            <person name="Irie R."/>
            <person name="Wakamatsu A."/>
            <person name="Hayashi K."/>
            <person name="Sato H."/>
            <person name="Nagai K."/>
            <person name="Kimura K."/>
            <person name="Makita H."/>
            <person name="Sekine M."/>
            <person name="Obayashi M."/>
            <person name="Nishi T."/>
            <person name="Shibahara T."/>
            <person name="Tanaka T."/>
            <person name="Ishii S."/>
            <person name="Yamamoto J."/>
            <person name="Saito K."/>
            <person name="Kawai Y."/>
            <person name="Isono Y."/>
            <person name="Nakamura Y."/>
            <person name="Nagahari K."/>
            <person name="Murakami K."/>
            <person name="Yasuda T."/>
            <person name="Iwayanagi T."/>
            <person name="Wagatsuma M."/>
            <person name="Shiratori A."/>
            <person name="Sudo H."/>
            <person name="Hosoiri T."/>
            <person name="Kaku Y."/>
            <person name="Kodaira H."/>
            <person name="Kondo H."/>
            <person name="Sugawara M."/>
            <person name="Takahashi M."/>
            <person name="Kanda K."/>
            <person name="Yokoi T."/>
            <person name="Furuya T."/>
            <person name="Kikkawa E."/>
            <person name="Omura Y."/>
            <person name="Abe K."/>
            <person name="Kamihara K."/>
            <person name="Katsuta N."/>
            <person name="Sato K."/>
            <person name="Tanikawa M."/>
            <person name="Yamazaki M."/>
            <person name="Ninomiya K."/>
            <person name="Ishibashi T."/>
            <person name="Yamashita H."/>
            <person name="Murakawa K."/>
            <person name="Fujimori K."/>
            <person name="Tanai H."/>
            <person name="Kimata M."/>
            <person name="Watanabe M."/>
            <person name="Hiraoka S."/>
            <person name="Chiba Y."/>
            <person name="Ishida S."/>
            <person name="Ono Y."/>
            <person name="Takiguchi S."/>
            <person name="Watanabe S."/>
            <person name="Yosida M."/>
            <person name="Hotuta T."/>
            <person name="Kusano J."/>
            <person name="Kanehori K."/>
            <person name="Takahashi-Fujii A."/>
            <person name="Hara H."/>
            <person name="Tanase T.-O."/>
            <person name="Nomura Y."/>
            <person name="Togiya S."/>
            <person name="Komai F."/>
            <person name="Hara R."/>
            <person name="Takeuchi K."/>
            <person name="Arita M."/>
            <person name="Imose N."/>
            <person name="Musashino K."/>
            <person name="Yuuki H."/>
            <person name="Oshima A."/>
            <person name="Sasaki N."/>
            <person name="Aotsuka S."/>
            <person name="Yoshikawa Y."/>
            <person name="Matsunawa H."/>
            <person name="Ichihara T."/>
            <person name="Shiohata N."/>
            <person name="Sano S."/>
            <person name="Moriya S."/>
            <person name="Momiyama H."/>
            <person name="Satoh N."/>
            <person name="Takami S."/>
            <person name="Terashima Y."/>
            <person name="Suzuki O."/>
            <person name="Nakagawa S."/>
            <person name="Senoh A."/>
            <person name="Mizoguchi H."/>
            <person name="Goto Y."/>
            <person name="Shimizu F."/>
            <person name="Wakebe H."/>
            <person name="Hishigaki H."/>
            <person name="Watanabe T."/>
            <person name="Sugiyama A."/>
            <person name="Takemoto M."/>
            <person name="Kawakami B."/>
            <person name="Yamazaki M."/>
            <person name="Watanabe K."/>
            <person name="Kumagai A."/>
            <person name="Itakura S."/>
            <person name="Fukuzumi Y."/>
            <person name="Fujimori Y."/>
            <person name="Komiyama M."/>
            <person name="Tashiro H."/>
            <person name="Tanigami A."/>
            <person name="Fujiwara T."/>
            <person name="Ono T."/>
            <person name="Yamada K."/>
            <person name="Fujii Y."/>
            <person name="Ozaki K."/>
            <person name="Hirao M."/>
            <person name="Ohmori Y."/>
            <person name="Kawabata A."/>
            <person name="Hikiji T."/>
            <person name="Kobatake N."/>
            <person name="Inagaki H."/>
            <person name="Ikema Y."/>
            <person name="Okamoto S."/>
            <person name="Okitani R."/>
            <person name="Kawakami T."/>
            <person name="Noguchi S."/>
            <person name="Itoh T."/>
            <person name="Shigeta K."/>
            <person name="Senba T."/>
            <person name="Matsumura K."/>
            <person name="Nakajima Y."/>
            <person name="Mizuno T."/>
            <person name="Morinaga M."/>
            <person name="Sasaki M."/>
            <person name="Togashi T."/>
            <person name="Oyama M."/>
            <person name="Hata H."/>
            <person name="Watanabe M."/>
            <person name="Komatsu T."/>
            <person name="Mizushima-Sugano J."/>
            <person name="Satoh T."/>
            <person name="Shirai Y."/>
            <person name="Takahashi Y."/>
            <person name="Nakagawa K."/>
            <person name="Okumura K."/>
            <person name="Nagase T."/>
            <person name="Nomura N."/>
            <person name="Kikuchi H."/>
            <person name="Masuho Y."/>
            <person name="Yamashita R."/>
            <person name="Nakai K."/>
            <person name="Yada T."/>
            <person name="Nakamura Y."/>
            <person name="Ohara O."/>
            <person name="Isogai T."/>
            <person name="Sugano S."/>
        </authorList>
    </citation>
    <scope>NUCLEOTIDE SEQUENCE [LARGE SCALE MRNA] OF 1-667 (ISOFORM 1)</scope>
    <scope>VARIANTS PRO-213; PHE-233 AND GLY-334</scope>
    <source>
        <tissue>Brain</tissue>
    </source>
</reference>
<reference key="4">
    <citation type="journal article" date="2004" name="Protein Sci.">
        <title>Signal peptide prediction based on analysis of experimentally verified cleavage sites.</title>
        <authorList>
            <person name="Zhang Z."/>
            <person name="Henzel W.J."/>
        </authorList>
    </citation>
    <scope>PROTEIN SEQUENCE OF 28-42</scope>
</reference>
<reference key="5">
    <citation type="journal article" date="2013" name="J. Proteome Res.">
        <title>Toward a comprehensive characterization of a human cancer cell phosphoproteome.</title>
        <authorList>
            <person name="Zhou H."/>
            <person name="Di Palma S."/>
            <person name="Preisinger C."/>
            <person name="Peng M."/>
            <person name="Polat A.N."/>
            <person name="Heck A.J."/>
            <person name="Mohammed S."/>
        </authorList>
    </citation>
    <scope>PHOSPHORYLATION [LARGE SCALE ANALYSIS] AT SER-815</scope>
    <scope>IDENTIFICATION BY MASS SPECTROMETRY [LARGE SCALE ANALYSIS]</scope>
    <source>
        <tissue>Erythroleukemia</tissue>
    </source>
</reference>
<reference key="6">
    <citation type="journal article" date="2013" name="J. Proteome Res.">
        <title>LC-MS/MS characterization of O-glycosylation sites and glycan structures of human cerebrospinal fluid glycoproteins.</title>
        <authorList>
            <person name="Halim A."/>
            <person name="Ruetschi U."/>
            <person name="Larson G."/>
            <person name="Nilsson J."/>
        </authorList>
    </citation>
    <scope>GLYCOSYLATION AT SER-329 AND THR-363</scope>
    <scope>IDENTIFICATION BY MASS SPECTROMETRY</scope>
</reference>
<keyword id="KW-0025">Alternative splicing</keyword>
<keyword id="KW-0903">Direct protein sequencing</keyword>
<keyword id="KW-0325">Glycoprotein</keyword>
<keyword id="KW-0472">Membrane</keyword>
<keyword id="KW-0488">Methylation</keyword>
<keyword id="KW-0597">Phosphoprotein</keyword>
<keyword id="KW-1267">Proteomics identification</keyword>
<keyword id="KW-1185">Reference proteome</keyword>
<keyword id="KW-0732">Signal</keyword>
<keyword id="KW-0812">Transmembrane</keyword>
<keyword id="KW-1133">Transmembrane helix</keyword>
<feature type="signal peptide" evidence="5">
    <location>
        <begin position="1"/>
        <end position="27"/>
    </location>
</feature>
<feature type="chain" id="PRO_0000251978" description="Proline-rich transmembrane protein 3">
    <location>
        <begin position="28"/>
        <end position="981"/>
    </location>
</feature>
<feature type="topological domain" description="Extracellular" evidence="2">
    <location>
        <begin position="28"/>
        <end position="474"/>
    </location>
</feature>
<feature type="transmembrane region" description="Helical" evidence="2">
    <location>
        <begin position="475"/>
        <end position="495"/>
    </location>
</feature>
<feature type="topological domain" description="Cytoplasmic" evidence="2">
    <location>
        <begin position="496"/>
        <end position="501"/>
    </location>
</feature>
<feature type="transmembrane region" description="Helical" evidence="2">
    <location>
        <begin position="502"/>
        <end position="522"/>
    </location>
</feature>
<feature type="topological domain" description="Extracellular" evidence="2">
    <location>
        <begin position="523"/>
        <end position="542"/>
    </location>
</feature>
<feature type="transmembrane region" description="Helical" evidence="2">
    <location>
        <begin position="543"/>
        <end position="563"/>
    </location>
</feature>
<feature type="topological domain" description="Cytoplasmic" evidence="2">
    <location>
        <begin position="564"/>
        <end position="570"/>
    </location>
</feature>
<feature type="transmembrane region" description="Helical" evidence="2">
    <location>
        <begin position="571"/>
        <end position="591"/>
    </location>
</feature>
<feature type="topological domain" description="Extracellular" evidence="2">
    <location>
        <begin position="592"/>
        <end position="598"/>
    </location>
</feature>
<feature type="transmembrane region" description="Helical" evidence="2">
    <location>
        <begin position="599"/>
        <end position="619"/>
    </location>
</feature>
<feature type="topological domain" description="Cytoplasmic" evidence="2">
    <location>
        <begin position="620"/>
        <end position="638"/>
    </location>
</feature>
<feature type="transmembrane region" description="Helical" evidence="2">
    <location>
        <begin position="639"/>
        <end position="659"/>
    </location>
</feature>
<feature type="topological domain" description="Extracellular" evidence="2">
    <location>
        <begin position="660"/>
        <end position="679"/>
    </location>
</feature>
<feature type="transmembrane region" description="Helical" evidence="2">
    <location>
        <begin position="680"/>
        <end position="700"/>
    </location>
</feature>
<feature type="topological domain" description="Cytoplasmic" evidence="2">
    <location>
        <begin position="701"/>
        <end position="981"/>
    </location>
</feature>
<feature type="region of interest" description="Disordered" evidence="3">
    <location>
        <begin position="43"/>
        <end position="107"/>
    </location>
</feature>
<feature type="region of interest" description="Disordered" evidence="3">
    <location>
        <begin position="169"/>
        <end position="457"/>
    </location>
</feature>
<feature type="region of interest" description="O-glycosylated at one site">
    <location>
        <begin position="297"/>
        <end position="302"/>
    </location>
</feature>
<feature type="region of interest" description="Disordered" evidence="3">
    <location>
        <begin position="759"/>
        <end position="807"/>
    </location>
</feature>
<feature type="region of interest" description="Disordered" evidence="3">
    <location>
        <begin position="836"/>
        <end position="865"/>
    </location>
</feature>
<feature type="region of interest" description="Disordered" evidence="3">
    <location>
        <begin position="937"/>
        <end position="981"/>
    </location>
</feature>
<feature type="compositionally biased region" description="Basic and acidic residues" evidence="3">
    <location>
        <begin position="65"/>
        <end position="85"/>
    </location>
</feature>
<feature type="compositionally biased region" description="Basic and acidic residues" evidence="3">
    <location>
        <begin position="331"/>
        <end position="340"/>
    </location>
</feature>
<feature type="compositionally biased region" description="Polar residues" evidence="3">
    <location>
        <begin position="411"/>
        <end position="427"/>
    </location>
</feature>
<feature type="compositionally biased region" description="Low complexity" evidence="3">
    <location>
        <begin position="437"/>
        <end position="457"/>
    </location>
</feature>
<feature type="compositionally biased region" description="Low complexity" evidence="3">
    <location>
        <begin position="765"/>
        <end position="780"/>
    </location>
</feature>
<feature type="compositionally biased region" description="Polar residues" evidence="3">
    <location>
        <begin position="972"/>
        <end position="981"/>
    </location>
</feature>
<feature type="modified residue" description="Phosphoserine" evidence="1">
    <location>
        <position position="777"/>
    </location>
</feature>
<feature type="modified residue" description="Omega-N-methylarginine" evidence="1">
    <location>
        <position position="780"/>
    </location>
</feature>
<feature type="modified residue" description="Phosphoserine" evidence="1">
    <location>
        <position position="789"/>
    </location>
</feature>
<feature type="modified residue" description="Phosphoserine" evidence="1">
    <location>
        <position position="798"/>
    </location>
</feature>
<feature type="modified residue" description="Phosphoserine" evidence="1">
    <location>
        <position position="808"/>
    </location>
</feature>
<feature type="modified residue" description="Phosphoserine" evidence="10">
    <location>
        <position position="815"/>
    </location>
</feature>
<feature type="modified residue" description="Phosphoserine" evidence="1">
    <location>
        <position position="854"/>
    </location>
</feature>
<feature type="modified residue" description="Phosphoserine" evidence="1">
    <location>
        <position position="874"/>
    </location>
</feature>
<feature type="modified residue" description="Phosphoserine" evidence="1">
    <location>
        <position position="902"/>
    </location>
</feature>
<feature type="modified residue" description="Phosphoserine" evidence="1">
    <location>
        <position position="903"/>
    </location>
</feature>
<feature type="modified residue" description="Phosphoserine" evidence="1">
    <location>
        <position position="911"/>
    </location>
</feature>
<feature type="glycosylation site" description="O-linked (GalNAc...) serine" evidence="6">
    <location>
        <position position="329"/>
    </location>
</feature>
<feature type="glycosylation site" description="O-linked (GalNAc...) threonine" evidence="6">
    <location>
        <position position="363"/>
    </location>
</feature>
<feature type="glycosylation site" description="N-linked (GlcNAc...) asparagine" evidence="2">
    <location>
        <position position="379"/>
    </location>
</feature>
<feature type="splice variant" id="VSP_020845" description="In isoform 2." evidence="8">
    <location>
        <begin position="1"/>
        <end position="384"/>
    </location>
</feature>
<feature type="splice variant" id="VSP_020846" description="In isoform 3." evidence="7 8">
    <original>DEAEEWPGRPQSHPPAPPVQAPSTSRRGLIR</original>
    <variation>GESMAGVWGEGVLCLVTENLCWGCMGAEGGE</variation>
    <location>
        <begin position="391"/>
        <end position="421"/>
    </location>
</feature>
<feature type="splice variant" id="VSP_020847" description="In isoform 3." evidence="7 8">
    <location>
        <begin position="422"/>
        <end position="981"/>
    </location>
</feature>
<feature type="sequence variant" id="VAR_027745" description="In dbSNP:rs279601.">
    <original>Q</original>
    <variation>E</variation>
    <location>
        <position position="138"/>
    </location>
</feature>
<feature type="sequence variant" id="VAR_061695" description="In dbSNP:rs55847610." evidence="4">
    <original>S</original>
    <variation>P</variation>
    <location>
        <position position="213"/>
    </location>
</feature>
<feature type="sequence variant" id="VAR_061696" description="In dbSNP:rs55847233." evidence="4">
    <original>L</original>
    <variation>F</variation>
    <location>
        <position position="233"/>
    </location>
</feature>
<feature type="sequence variant" id="VAR_061697" description="In dbSNP:rs59465469." evidence="4">
    <original>R</original>
    <variation>G</variation>
    <location>
        <position position="334"/>
    </location>
</feature>
<feature type="sequence variant" id="VAR_027746" description="In dbSNP:rs2279794.">
    <original>L</original>
    <variation>I</variation>
    <location>
        <position position="860"/>
    </location>
</feature>
<feature type="sequence conflict" description="In Ref. 2; AAH40508." evidence="9" ref="2">
    <original>Q</original>
    <variation>K</variation>
    <location>
        <position position="410"/>
    </location>
</feature>
<feature type="sequence conflict" description="In Ref. 2; AAH40508." evidence="9" ref="2">
    <original>A</original>
    <variation>T</variation>
    <location>
        <position position="519"/>
    </location>
</feature>
<feature type="sequence conflict" description="In Ref. 2; AAH40508." evidence="9" ref="2">
    <original>A</original>
    <variation>T</variation>
    <location>
        <position position="819"/>
    </location>
</feature>
<protein>
    <recommendedName>
        <fullName>Proline-rich transmembrane protein 3</fullName>
    </recommendedName>
</protein>
<name>PRRT3_HUMAN</name>
<organism>
    <name type="scientific">Homo sapiens</name>
    <name type="common">Human</name>
    <dbReference type="NCBI Taxonomy" id="9606"/>
    <lineage>
        <taxon>Eukaryota</taxon>
        <taxon>Metazoa</taxon>
        <taxon>Chordata</taxon>
        <taxon>Craniata</taxon>
        <taxon>Vertebrata</taxon>
        <taxon>Euteleostomi</taxon>
        <taxon>Mammalia</taxon>
        <taxon>Eutheria</taxon>
        <taxon>Euarchontoglires</taxon>
        <taxon>Primates</taxon>
        <taxon>Haplorrhini</taxon>
        <taxon>Catarrhini</taxon>
        <taxon>Hominidae</taxon>
        <taxon>Homo</taxon>
    </lineage>
</organism>
<sequence>MASSPWGCVCGLLLLLLPLLGTGPALGRGFPRPLENSEIPMIPGAHPKGSVGSEPQAFDVFPENPRADSHRNSDVRHAPAEEMPEKPVASPLGPALYGPKAAQGAQRERLPVTDDLQMAQGPSSHGWTGPLDSQELLQQEAVAPHPVGHPHLTFIPTTPRRQLRVATVPPSLQHEGQEGQWPPRDEGLKAKTKSRVPPTSPSDHQGPPHTLVSHSGTVKRPVLEGQGGFEEHLQEAAQGPHFTQQDPAAPDVGSVPPVEVVYSQEPGAQPDLALARSLPPAEELPVETPKRAGAEVSWEVSSPGPPPKQADLPDAKDSPGPQPTDPPASEAPDRPSKPERAAMNGADPISPQRVRGAVEAPGTPKSLIPGPSDPGPAVNRTESPMGALQPDEAEEWPGRPQSHPPAPPVQAPSTSRRGLIRVTTQRALGQPPPPEPTASSMASAPASSPPANATAPPLRWGPLRRVLSFSWELHVYGVGVLFLLPALLALAALAAAPAGPRLALVAAVLVLVASALRSAYMLTDPYGSQARLGVRGGLVLYNLPFPLLLTALAALTLLGLGAGLPPPLQNPLLLGAVALVHGVGLLATDLLSTWSVLNLLTQGLSCAWGAAVALGTLCLCRRRLLDGPRGWDASPGPRLLAVAGALGLLASGLQLAAALWLYPGPGRVGRFSWAWWGVHFWLRLLELTWALALALAAVAAARPRPPTEHACWAKLMRLACPAPSGKSEVPERPNNCYAGPSNVGAGSLDISKSLIRNPAESGQLATPSSGAWGSAASLGRGPQGGPGLSRNGVGPAPSLSELDLRPPSPINLSRSIDAALFREHLVRDSVFQRCGLRGLASPPPGGALRPRRGSHPKAELDDAGSSLLRGRCRSLSDVRVRGPVPQHVVEAPDGAAAAASGSSLDSFSRGSLKISWNPWRHGLSSVDSLPLDELPSTVQLLPAPTPAPDSTAARQGDGQGEVQPRGKPGESRSASSDTIEL</sequence>
<proteinExistence type="evidence at protein level"/>
<comment type="subcellular location">
    <subcellularLocation>
        <location evidence="9">Membrane</location>
        <topology evidence="9">Multi-pass membrane protein</topology>
    </subcellularLocation>
</comment>
<comment type="alternative products">
    <event type="alternative splicing"/>
    <isoform>
        <id>Q5FWE3-1</id>
        <name>1</name>
        <sequence type="displayed"/>
    </isoform>
    <isoform>
        <id>Q5FWE3-2</id>
        <name>2</name>
        <sequence type="described" ref="VSP_020845"/>
    </isoform>
    <isoform>
        <id>Q5FWE3-3</id>
        <name>3</name>
        <sequence type="described" ref="VSP_020846 VSP_020847"/>
    </isoform>
</comment>
<dbReference type="EMBL" id="AY358158">
    <property type="protein sequence ID" value="AAQ88525.1"/>
    <property type="molecule type" value="mRNA"/>
</dbReference>
<dbReference type="EMBL" id="BC040508">
    <property type="protein sequence ID" value="AAH40508.1"/>
    <property type="molecule type" value="mRNA"/>
</dbReference>
<dbReference type="EMBL" id="BC089447">
    <property type="protein sequence ID" value="AAH89447.1"/>
    <property type="molecule type" value="mRNA"/>
</dbReference>
<dbReference type="EMBL" id="BC111555">
    <property type="protein sequence ID" value="AAI11556.1"/>
    <property type="molecule type" value="mRNA"/>
</dbReference>
<dbReference type="EMBL" id="AK090993">
    <property type="protein sequence ID" value="BAC03564.1"/>
    <property type="molecule type" value="mRNA"/>
</dbReference>
<dbReference type="CCDS" id="CCDS43049.1">
    <molecule id="Q5FWE3-1"/>
</dbReference>
<dbReference type="CCDS" id="CCDS82732.1">
    <molecule id="Q5FWE3-3"/>
</dbReference>
<dbReference type="RefSeq" id="NP_001305800.1">
    <molecule id="Q5FWE3-3"/>
    <property type="nucleotide sequence ID" value="NM_001318871.2"/>
</dbReference>
<dbReference type="RefSeq" id="NP_997234.3">
    <molecule id="Q5FWE3-1"/>
    <property type="nucleotide sequence ID" value="NM_207351.5"/>
</dbReference>
<dbReference type="RefSeq" id="XP_011531930.1">
    <molecule id="Q5FWE3-1"/>
    <property type="nucleotide sequence ID" value="XM_011533628.3"/>
</dbReference>
<dbReference type="RefSeq" id="XP_011531931.1">
    <molecule id="Q5FWE3-1"/>
    <property type="nucleotide sequence ID" value="XM_011533629.3"/>
</dbReference>
<dbReference type="RefSeq" id="XP_016861745.1">
    <property type="nucleotide sequence ID" value="XM_017006256.1"/>
</dbReference>
<dbReference type="RefSeq" id="XP_047303983.1">
    <molecule id="Q5FWE3-1"/>
    <property type="nucleotide sequence ID" value="XM_047448027.1"/>
</dbReference>
<dbReference type="BioGRID" id="130093">
    <property type="interactions" value="11"/>
</dbReference>
<dbReference type="FunCoup" id="Q5FWE3">
    <property type="interactions" value="125"/>
</dbReference>
<dbReference type="IntAct" id="Q5FWE3">
    <property type="interactions" value="2"/>
</dbReference>
<dbReference type="STRING" id="9606.ENSP00000392511"/>
<dbReference type="CarbonylDB" id="Q5FWE3"/>
<dbReference type="GlyConnect" id="724">
    <property type="glycosylation" value="1 O-Linked glycan (1 site)"/>
</dbReference>
<dbReference type="GlyCosmos" id="Q5FWE3">
    <property type="glycosylation" value="4 sites, 2 glycans"/>
</dbReference>
<dbReference type="GlyGen" id="Q5FWE3">
    <property type="glycosylation" value="11 sites, 2 N-linked glycans (2 sites), 3 O-linked glycans (5 sites)"/>
</dbReference>
<dbReference type="iPTMnet" id="Q5FWE3"/>
<dbReference type="PhosphoSitePlus" id="Q5FWE3"/>
<dbReference type="SwissPalm" id="Q5FWE3"/>
<dbReference type="BioMuta" id="PRRT3"/>
<dbReference type="DMDM" id="160332300"/>
<dbReference type="jPOST" id="Q5FWE3"/>
<dbReference type="MassIVE" id="Q5FWE3"/>
<dbReference type="PaxDb" id="9606-ENSP00000392511"/>
<dbReference type="PeptideAtlas" id="Q5FWE3"/>
<dbReference type="ProteomicsDB" id="62807">
    <molecule id="Q5FWE3-1"/>
</dbReference>
<dbReference type="ProteomicsDB" id="62808">
    <molecule id="Q5FWE3-2"/>
</dbReference>
<dbReference type="ProteomicsDB" id="62809">
    <molecule id="Q5FWE3-3"/>
</dbReference>
<dbReference type="Antibodypedia" id="25871">
    <property type="antibodies" value="25 antibodies from 10 providers"/>
</dbReference>
<dbReference type="DNASU" id="285368"/>
<dbReference type="Ensembl" id="ENST00000295984.7">
    <molecule id="Q5FWE3-1"/>
    <property type="protein sequence ID" value="ENSP00000295984.3"/>
    <property type="gene ID" value="ENSG00000163704.13"/>
</dbReference>
<dbReference type="Ensembl" id="ENST00000411976.2">
    <molecule id="Q5FWE3-3"/>
    <property type="protein sequence ID" value="ENSP00000404512.2"/>
    <property type="gene ID" value="ENSG00000163704.13"/>
</dbReference>
<dbReference type="Ensembl" id="ENST00000412055.6">
    <molecule id="Q5FWE3-1"/>
    <property type="protein sequence ID" value="ENSP00000392511.1"/>
    <property type="gene ID" value="ENSG00000163704.13"/>
</dbReference>
<dbReference type="GeneID" id="285368"/>
<dbReference type="KEGG" id="hsa:285368"/>
<dbReference type="MANE-Select" id="ENST00000412055.6">
    <property type="protein sequence ID" value="ENSP00000392511.1"/>
    <property type="RefSeq nucleotide sequence ID" value="NM_207351.5"/>
    <property type="RefSeq protein sequence ID" value="NP_997234.3"/>
</dbReference>
<dbReference type="UCSC" id="uc003bul.2">
    <molecule id="Q5FWE3-1"/>
    <property type="organism name" value="human"/>
</dbReference>
<dbReference type="AGR" id="HGNC:26591"/>
<dbReference type="CTD" id="285368"/>
<dbReference type="DisGeNET" id="285368"/>
<dbReference type="GeneCards" id="PRRT3"/>
<dbReference type="HGNC" id="HGNC:26591">
    <property type="gene designation" value="PRRT3"/>
</dbReference>
<dbReference type="HPA" id="ENSG00000163704">
    <property type="expression patterns" value="Group enriched (brain, choroid plexus, fallopian tube, parathyroid gland, pituitary gland)"/>
</dbReference>
<dbReference type="MIM" id="619993">
    <property type="type" value="gene"/>
</dbReference>
<dbReference type="neXtProt" id="NX_Q5FWE3"/>
<dbReference type="OpenTargets" id="ENSG00000163704"/>
<dbReference type="PharmGKB" id="PA142671133"/>
<dbReference type="VEuPathDB" id="HostDB:ENSG00000163704"/>
<dbReference type="eggNOG" id="ENOG502QSMJ">
    <property type="taxonomic scope" value="Eukaryota"/>
</dbReference>
<dbReference type="GeneTree" id="ENSGT00730000111360"/>
<dbReference type="HOGENOM" id="CLU_304190_0_0_1"/>
<dbReference type="InParanoid" id="Q5FWE3"/>
<dbReference type="OMA" id="SEVQPRC"/>
<dbReference type="OrthoDB" id="10066605at2759"/>
<dbReference type="PAN-GO" id="Q5FWE3">
    <property type="GO annotations" value="0 GO annotations based on evolutionary models"/>
</dbReference>
<dbReference type="PhylomeDB" id="Q5FWE3"/>
<dbReference type="TreeFam" id="TF333410"/>
<dbReference type="PathwayCommons" id="Q5FWE3"/>
<dbReference type="SignaLink" id="Q5FWE3"/>
<dbReference type="BioGRID-ORCS" id="285368">
    <property type="hits" value="7 hits in 1147 CRISPR screens"/>
</dbReference>
<dbReference type="GenomeRNAi" id="285368"/>
<dbReference type="Pharos" id="Q5FWE3">
    <property type="development level" value="Tdark"/>
</dbReference>
<dbReference type="PRO" id="PR:Q5FWE3"/>
<dbReference type="Proteomes" id="UP000005640">
    <property type="component" value="Chromosome 3"/>
</dbReference>
<dbReference type="RNAct" id="Q5FWE3">
    <property type="molecule type" value="protein"/>
</dbReference>
<dbReference type="Bgee" id="ENSG00000163704">
    <property type="expression patterns" value="Expressed in oviduct epithelium and 113 other cell types or tissues"/>
</dbReference>
<dbReference type="GO" id="GO:0016020">
    <property type="term" value="C:membrane"/>
    <property type="evidence" value="ECO:0007669"/>
    <property type="project" value="UniProtKB-SubCell"/>
</dbReference>
<dbReference type="InterPro" id="IPR043242">
    <property type="entry name" value="PRRT3"/>
</dbReference>
<dbReference type="PANTHER" id="PTHR47400">
    <property type="entry name" value="PROLINE-RICH TRANSMEMBRANE PROTEIN 3"/>
    <property type="match status" value="1"/>
</dbReference>
<dbReference type="PANTHER" id="PTHR47400:SF1">
    <property type="entry name" value="PROLINE-RICH TRANSMEMBRANE PROTEIN 3"/>
    <property type="match status" value="1"/>
</dbReference>
<evidence type="ECO:0000250" key="1">
    <source>
        <dbReference type="UniProtKB" id="Q6PE13"/>
    </source>
</evidence>
<evidence type="ECO:0000255" key="2"/>
<evidence type="ECO:0000256" key="3">
    <source>
        <dbReference type="SAM" id="MobiDB-lite"/>
    </source>
</evidence>
<evidence type="ECO:0000269" key="4">
    <source>
    </source>
</evidence>
<evidence type="ECO:0000269" key="5">
    <source>
    </source>
</evidence>
<evidence type="ECO:0000269" key="6">
    <source>
    </source>
</evidence>
<evidence type="ECO:0000303" key="7">
    <source>
    </source>
</evidence>
<evidence type="ECO:0000303" key="8">
    <source>
    </source>
</evidence>
<evidence type="ECO:0000305" key="9"/>
<evidence type="ECO:0007744" key="10">
    <source>
    </source>
</evidence>